<reference key="1">
    <citation type="journal article" date="2005" name="Nucleic Acids Res.">
        <title>Genome dynamics and diversity of Shigella species, the etiologic agents of bacillary dysentery.</title>
        <authorList>
            <person name="Yang F."/>
            <person name="Yang J."/>
            <person name="Zhang X."/>
            <person name="Chen L."/>
            <person name="Jiang Y."/>
            <person name="Yan Y."/>
            <person name="Tang X."/>
            <person name="Wang J."/>
            <person name="Xiong Z."/>
            <person name="Dong J."/>
            <person name="Xue Y."/>
            <person name="Zhu Y."/>
            <person name="Xu X."/>
            <person name="Sun L."/>
            <person name="Chen S."/>
            <person name="Nie H."/>
            <person name="Peng J."/>
            <person name="Xu J."/>
            <person name="Wang Y."/>
            <person name="Yuan Z."/>
            <person name="Wen Y."/>
            <person name="Yao Z."/>
            <person name="Shen Y."/>
            <person name="Qiang B."/>
            <person name="Hou Y."/>
            <person name="Yu J."/>
            <person name="Jin Q."/>
        </authorList>
    </citation>
    <scope>NUCLEOTIDE SEQUENCE [LARGE SCALE GENOMIC DNA]</scope>
    <source>
        <strain>Sd197</strain>
    </source>
</reference>
<accession>Q328K0</accession>
<proteinExistence type="inferred from homology"/>
<comment type="function">
    <text evidence="1">Catalyzes the isomerization of L-ribulose 5-phosphate to D-xylulose 5-phosphate. Is involved in the anaerobic L-ascorbate utilization.</text>
</comment>
<comment type="catalytic activity">
    <reaction evidence="1">
        <text>L-ribulose 5-phosphate = D-xylulose 5-phosphate</text>
        <dbReference type="Rhea" id="RHEA:22368"/>
        <dbReference type="ChEBI" id="CHEBI:57737"/>
        <dbReference type="ChEBI" id="CHEBI:58226"/>
        <dbReference type="EC" id="5.1.3.4"/>
    </reaction>
</comment>
<comment type="cofactor">
    <cofactor evidence="1">
        <name>Zn(2+)</name>
        <dbReference type="ChEBI" id="CHEBI:29105"/>
    </cofactor>
    <text evidence="1">Binds 1 zinc ion per subunit.</text>
</comment>
<comment type="pathway">
    <text evidence="1">Cofactor degradation; L-ascorbate degradation; D-xylulose 5-phosphate from L-ascorbate: step 4/4.</text>
</comment>
<comment type="induction">
    <text evidence="1">Induced by L-ascorbate. Repressed by UlaR.</text>
</comment>
<comment type="similarity">
    <text evidence="1">Belongs to the aldolase class II family. AraD/FucA subfamily.</text>
</comment>
<feature type="chain" id="PRO_0000233248" description="L-ribulose-5-phosphate 4-epimerase UlaF">
    <location>
        <begin position="1"/>
        <end position="228"/>
    </location>
</feature>
<feature type="active site" description="Proton donor/acceptor" evidence="1">
    <location>
        <position position="118"/>
    </location>
</feature>
<feature type="active site" description="Proton donor/acceptor" evidence="1">
    <location>
        <position position="225"/>
    </location>
</feature>
<feature type="binding site" evidence="1">
    <location>
        <begin position="26"/>
        <end position="27"/>
    </location>
    <ligand>
        <name>substrate</name>
    </ligand>
</feature>
<feature type="binding site" evidence="1">
    <location>
        <begin position="43"/>
        <end position="44"/>
    </location>
    <ligand>
        <name>substrate</name>
    </ligand>
</feature>
<feature type="binding site" evidence="1">
    <location>
        <begin position="72"/>
        <end position="73"/>
    </location>
    <ligand>
        <name>substrate</name>
    </ligand>
</feature>
<feature type="binding site" evidence="1">
    <location>
        <position position="74"/>
    </location>
    <ligand>
        <name>Zn(2+)</name>
        <dbReference type="ChEBI" id="CHEBI:29105"/>
    </ligand>
</feature>
<feature type="binding site" evidence="1">
    <location>
        <position position="93"/>
    </location>
    <ligand>
        <name>Zn(2+)</name>
        <dbReference type="ChEBI" id="CHEBI:29105"/>
    </ligand>
</feature>
<feature type="binding site" evidence="1">
    <location>
        <position position="95"/>
    </location>
    <ligand>
        <name>Zn(2+)</name>
        <dbReference type="ChEBI" id="CHEBI:29105"/>
    </ligand>
</feature>
<feature type="binding site" evidence="1">
    <location>
        <position position="167"/>
    </location>
    <ligand>
        <name>Zn(2+)</name>
        <dbReference type="ChEBI" id="CHEBI:29105"/>
    </ligand>
</feature>
<organism>
    <name type="scientific">Shigella dysenteriae serotype 1 (strain Sd197)</name>
    <dbReference type="NCBI Taxonomy" id="300267"/>
    <lineage>
        <taxon>Bacteria</taxon>
        <taxon>Pseudomonadati</taxon>
        <taxon>Pseudomonadota</taxon>
        <taxon>Gammaproteobacteria</taxon>
        <taxon>Enterobacterales</taxon>
        <taxon>Enterobacteriaceae</taxon>
        <taxon>Shigella</taxon>
    </lineage>
</organism>
<gene>
    <name evidence="1" type="primary">ulaF</name>
    <name type="ordered locus">SDY_4367</name>
</gene>
<dbReference type="EC" id="5.1.3.4" evidence="1"/>
<dbReference type="EMBL" id="CP000034">
    <property type="protein sequence ID" value="ABB64255.1"/>
    <property type="molecule type" value="Genomic_DNA"/>
</dbReference>
<dbReference type="RefSeq" id="WP_001170811.1">
    <property type="nucleotide sequence ID" value="NC_007606.1"/>
</dbReference>
<dbReference type="RefSeq" id="YP_405746.1">
    <property type="nucleotide sequence ID" value="NC_007606.1"/>
</dbReference>
<dbReference type="SMR" id="Q328K0"/>
<dbReference type="STRING" id="300267.SDY_4367"/>
<dbReference type="EnsemblBacteria" id="ABB64255">
    <property type="protein sequence ID" value="ABB64255"/>
    <property type="gene ID" value="SDY_4367"/>
</dbReference>
<dbReference type="KEGG" id="sdy:SDY_4367"/>
<dbReference type="PATRIC" id="fig|300267.13.peg.5156"/>
<dbReference type="HOGENOM" id="CLU_006033_5_0_6"/>
<dbReference type="UniPathway" id="UPA00263">
    <property type="reaction ID" value="UER00380"/>
</dbReference>
<dbReference type="Proteomes" id="UP000002716">
    <property type="component" value="Chromosome"/>
</dbReference>
<dbReference type="GO" id="GO:0005829">
    <property type="term" value="C:cytosol"/>
    <property type="evidence" value="ECO:0007669"/>
    <property type="project" value="TreeGrafter"/>
</dbReference>
<dbReference type="GO" id="GO:0016832">
    <property type="term" value="F:aldehyde-lyase activity"/>
    <property type="evidence" value="ECO:0007669"/>
    <property type="project" value="TreeGrafter"/>
</dbReference>
<dbReference type="GO" id="GO:0008742">
    <property type="term" value="F:L-ribulose-phosphate 4-epimerase activity"/>
    <property type="evidence" value="ECO:0007669"/>
    <property type="project" value="UniProtKB-UniRule"/>
</dbReference>
<dbReference type="GO" id="GO:0008270">
    <property type="term" value="F:zinc ion binding"/>
    <property type="evidence" value="ECO:0007669"/>
    <property type="project" value="UniProtKB-UniRule"/>
</dbReference>
<dbReference type="GO" id="GO:0019854">
    <property type="term" value="P:L-ascorbic acid catabolic process"/>
    <property type="evidence" value="ECO:0007669"/>
    <property type="project" value="UniProtKB-UniRule"/>
</dbReference>
<dbReference type="GO" id="GO:0019323">
    <property type="term" value="P:pentose catabolic process"/>
    <property type="evidence" value="ECO:0007669"/>
    <property type="project" value="TreeGrafter"/>
</dbReference>
<dbReference type="CDD" id="cd00398">
    <property type="entry name" value="Aldolase_II"/>
    <property type="match status" value="1"/>
</dbReference>
<dbReference type="FunFam" id="3.40.225.10:FF:000001">
    <property type="entry name" value="L-ribulose-5-phosphate 4-epimerase UlaF"/>
    <property type="match status" value="1"/>
</dbReference>
<dbReference type="Gene3D" id="3.40.225.10">
    <property type="entry name" value="Class II aldolase/adducin N-terminal domain"/>
    <property type="match status" value="1"/>
</dbReference>
<dbReference type="HAMAP" id="MF_01952">
    <property type="entry name" value="UlaF"/>
    <property type="match status" value="1"/>
</dbReference>
<dbReference type="InterPro" id="IPR050197">
    <property type="entry name" value="Aldolase_class_II_sugar_metab"/>
</dbReference>
<dbReference type="InterPro" id="IPR001303">
    <property type="entry name" value="Aldolase_II/adducin_N"/>
</dbReference>
<dbReference type="InterPro" id="IPR036409">
    <property type="entry name" value="Aldolase_II/adducin_N_sf"/>
</dbReference>
<dbReference type="InterPro" id="IPR023499">
    <property type="entry name" value="UlaF"/>
</dbReference>
<dbReference type="NCBIfam" id="NF006047">
    <property type="entry name" value="PRK08193.1"/>
    <property type="match status" value="1"/>
</dbReference>
<dbReference type="NCBIfam" id="NF009003">
    <property type="entry name" value="PRK12348.1"/>
    <property type="match status" value="1"/>
</dbReference>
<dbReference type="PANTHER" id="PTHR22789">
    <property type="entry name" value="FUCULOSE PHOSPHATE ALDOLASE"/>
    <property type="match status" value="1"/>
</dbReference>
<dbReference type="PANTHER" id="PTHR22789:SF9">
    <property type="entry name" value="L-RIBULOSE-5-PHOSPHATE 4-EPIMERASE ULAF"/>
    <property type="match status" value="1"/>
</dbReference>
<dbReference type="Pfam" id="PF00596">
    <property type="entry name" value="Aldolase_II"/>
    <property type="match status" value="1"/>
</dbReference>
<dbReference type="SMART" id="SM01007">
    <property type="entry name" value="Aldolase_II"/>
    <property type="match status" value="1"/>
</dbReference>
<dbReference type="SUPFAM" id="SSF53639">
    <property type="entry name" value="AraD/HMP-PK domain-like"/>
    <property type="match status" value="1"/>
</dbReference>
<keyword id="KW-0119">Carbohydrate metabolism</keyword>
<keyword id="KW-0413">Isomerase</keyword>
<keyword id="KW-0479">Metal-binding</keyword>
<keyword id="KW-1185">Reference proteome</keyword>
<keyword id="KW-0862">Zinc</keyword>
<protein>
    <recommendedName>
        <fullName evidence="1">L-ribulose-5-phosphate 4-epimerase UlaF</fullName>
        <ecNumber evidence="1">5.1.3.4</ecNumber>
    </recommendedName>
    <alternativeName>
        <fullName evidence="1">L-ascorbate utilization protein F</fullName>
    </alternativeName>
    <alternativeName>
        <fullName evidence="1">Phosphoribulose isomerase</fullName>
    </alternativeName>
</protein>
<name>ULAF_SHIDS</name>
<sequence length="228" mass="25339">MQKLKQQVFEANMDLPRYGLVTFTWGNVSAIDRERGLVVIKPSGVAYETMKADDMVVVDMSGKVVEGEYRPSSDTATHLELYRRYPSLGGIVHTHSTHATAWAQAGLAIPALGTTHADYFFGDIPCTRGLSEEEVQGEYELNTGKVIIETLGNAEPLHTPGIVVYQHGPFAWGKDAHDAVHNAVVMEEVAKMAWIARSINPQLNHIDSFLMNEHFMRKHGPNAYYGQK</sequence>
<evidence type="ECO:0000255" key="1">
    <source>
        <dbReference type="HAMAP-Rule" id="MF_01952"/>
    </source>
</evidence>